<keyword id="KW-0119">Carbohydrate metabolism</keyword>
<keyword id="KW-0963">Cytoplasm</keyword>
<keyword id="KW-0413">Isomerase</keyword>
<keyword id="KW-0460">Magnesium</keyword>
<keyword id="KW-0479">Metal-binding</keyword>
<keyword id="KW-0859">Xylose metabolism</keyword>
<sequence length="445" mass="50322">MAQSSTNKVSYFESVNKVLYEGKGSKNPLAFKYYNPEEIVGDKTMKEQLRFSIAYWHTFTADGTDPFGAATMQRAWDKYDGMDLAKARVEAAFQLFEKLNVPFFAFHDRDIAPEGSTLRETNKNLDVIVTMIKDYMKTSNVKLLWNTANMFTNPRFVHGAATSCNADVFAYAAAQVKKGLETAKELGAENYVFWGGREGYDTLLNTNLKLELDNLARFMQMSVDYAKEIGYTGQFLIEPKPKEPTTHQYDTDAATTISFLRQYGLENHFKLNLEANHATLAGHTFEHELRVARVQGFLGSVDANQGNPLLGWDTDEFPTNLYSTTLAMYEILQNGGLGSGGLNFDAKVRRASFEEEDLVYAHIAGMDAFARGLKVAHKLLEDRVFENIIDERYHSFRDGIGLEIVEGRANFHTLEQYALQNSIIKNQSGKQERLKAILNQYILEV</sequence>
<comment type="catalytic activity">
    <reaction evidence="1">
        <text>alpha-D-xylose = alpha-D-xylulofuranose</text>
        <dbReference type="Rhea" id="RHEA:22816"/>
        <dbReference type="ChEBI" id="CHEBI:28518"/>
        <dbReference type="ChEBI" id="CHEBI:188998"/>
        <dbReference type="EC" id="5.3.1.5"/>
    </reaction>
</comment>
<comment type="cofactor">
    <cofactor evidence="1">
        <name>Mg(2+)</name>
        <dbReference type="ChEBI" id="CHEBI:18420"/>
    </cofactor>
    <text evidence="1">Binds 2 magnesium ions per subunit.</text>
</comment>
<comment type="subunit">
    <text evidence="1">Homotetramer.</text>
</comment>
<comment type="subcellular location">
    <subcellularLocation>
        <location evidence="1">Cytoplasm</location>
    </subcellularLocation>
</comment>
<comment type="similarity">
    <text evidence="1">Belongs to the xylose isomerase family.</text>
</comment>
<feature type="chain" id="PRO_0000195761" description="Xylose isomerase">
    <location>
        <begin position="1"/>
        <end position="445"/>
    </location>
</feature>
<feature type="active site" evidence="1">
    <location>
        <position position="107"/>
    </location>
</feature>
<feature type="active site" evidence="1">
    <location>
        <position position="110"/>
    </location>
</feature>
<feature type="binding site" evidence="1">
    <location>
        <position position="238"/>
    </location>
    <ligand>
        <name>Mg(2+)</name>
        <dbReference type="ChEBI" id="CHEBI:18420"/>
        <label>1</label>
    </ligand>
</feature>
<feature type="binding site" evidence="1">
    <location>
        <position position="274"/>
    </location>
    <ligand>
        <name>Mg(2+)</name>
        <dbReference type="ChEBI" id="CHEBI:18420"/>
        <label>1</label>
    </ligand>
</feature>
<feature type="binding site" evidence="1">
    <location>
        <position position="274"/>
    </location>
    <ligand>
        <name>Mg(2+)</name>
        <dbReference type="ChEBI" id="CHEBI:18420"/>
        <label>2</label>
    </ligand>
</feature>
<feature type="binding site" evidence="1">
    <location>
        <position position="277"/>
    </location>
    <ligand>
        <name>Mg(2+)</name>
        <dbReference type="ChEBI" id="CHEBI:18420"/>
        <label>2</label>
    </ligand>
</feature>
<feature type="binding site" evidence="1">
    <location>
        <position position="302"/>
    </location>
    <ligand>
        <name>Mg(2+)</name>
        <dbReference type="ChEBI" id="CHEBI:18420"/>
        <label>1</label>
    </ligand>
</feature>
<feature type="binding site" evidence="1">
    <location>
        <position position="313"/>
    </location>
    <ligand>
        <name>Mg(2+)</name>
        <dbReference type="ChEBI" id="CHEBI:18420"/>
        <label>2</label>
    </ligand>
</feature>
<feature type="binding site" evidence="1">
    <location>
        <position position="315"/>
    </location>
    <ligand>
        <name>Mg(2+)</name>
        <dbReference type="ChEBI" id="CHEBI:18420"/>
        <label>2</label>
    </ligand>
</feature>
<feature type="binding site" evidence="1">
    <location>
        <position position="345"/>
    </location>
    <ligand>
        <name>Mg(2+)</name>
        <dbReference type="ChEBI" id="CHEBI:18420"/>
        <label>1</label>
    </ligand>
</feature>
<proteinExistence type="inferred from homology"/>
<protein>
    <recommendedName>
        <fullName evidence="1">Xylose isomerase</fullName>
        <ecNumber evidence="1">5.3.1.5</ecNumber>
    </recommendedName>
</protein>
<organism>
    <name type="scientific">Bacillus cereus (strain ATCC 10987 / NRS 248)</name>
    <dbReference type="NCBI Taxonomy" id="222523"/>
    <lineage>
        <taxon>Bacteria</taxon>
        <taxon>Bacillati</taxon>
        <taxon>Bacillota</taxon>
        <taxon>Bacilli</taxon>
        <taxon>Bacillales</taxon>
        <taxon>Bacillaceae</taxon>
        <taxon>Bacillus</taxon>
        <taxon>Bacillus cereus group</taxon>
    </lineage>
</organism>
<name>XYLA_BACC1</name>
<reference key="1">
    <citation type="journal article" date="2004" name="Nucleic Acids Res.">
        <title>The genome sequence of Bacillus cereus ATCC 10987 reveals metabolic adaptations and a large plasmid related to Bacillus anthracis pXO1.</title>
        <authorList>
            <person name="Rasko D.A."/>
            <person name="Ravel J."/>
            <person name="Oekstad O.A."/>
            <person name="Helgason E."/>
            <person name="Cer R.Z."/>
            <person name="Jiang L."/>
            <person name="Shores K.A."/>
            <person name="Fouts D.E."/>
            <person name="Tourasse N.J."/>
            <person name="Angiuoli S.V."/>
            <person name="Kolonay J.F."/>
            <person name="Nelson W.C."/>
            <person name="Kolstoe A.-B."/>
            <person name="Fraser C.M."/>
            <person name="Read T.D."/>
        </authorList>
    </citation>
    <scope>NUCLEOTIDE SEQUENCE [LARGE SCALE GENOMIC DNA]</scope>
    <source>
        <strain>ATCC 10987 / NRS 248</strain>
    </source>
</reference>
<dbReference type="EC" id="5.3.1.5" evidence="1"/>
<dbReference type="EMBL" id="AE017194">
    <property type="protein sequence ID" value="AAS41130.1"/>
    <property type="molecule type" value="Genomic_DNA"/>
</dbReference>
<dbReference type="SMR" id="Q739D2"/>
<dbReference type="KEGG" id="bca:BCE_2210"/>
<dbReference type="HOGENOM" id="CLU_037261_1_0_9"/>
<dbReference type="Proteomes" id="UP000002527">
    <property type="component" value="Chromosome"/>
</dbReference>
<dbReference type="GO" id="GO:0005737">
    <property type="term" value="C:cytoplasm"/>
    <property type="evidence" value="ECO:0007669"/>
    <property type="project" value="UniProtKB-SubCell"/>
</dbReference>
<dbReference type="GO" id="GO:0000287">
    <property type="term" value="F:magnesium ion binding"/>
    <property type="evidence" value="ECO:0007669"/>
    <property type="project" value="UniProtKB-UniRule"/>
</dbReference>
<dbReference type="GO" id="GO:0009045">
    <property type="term" value="F:xylose isomerase activity"/>
    <property type="evidence" value="ECO:0007669"/>
    <property type="project" value="UniProtKB-UniRule"/>
</dbReference>
<dbReference type="GO" id="GO:0042732">
    <property type="term" value="P:D-xylose metabolic process"/>
    <property type="evidence" value="ECO:0007669"/>
    <property type="project" value="UniProtKB-UniRule"/>
</dbReference>
<dbReference type="FunFam" id="3.20.20.150:FF:000002">
    <property type="entry name" value="Xylose isomerase"/>
    <property type="match status" value="1"/>
</dbReference>
<dbReference type="Gene3D" id="3.20.20.150">
    <property type="entry name" value="Divalent-metal-dependent TIM barrel enzymes"/>
    <property type="match status" value="1"/>
</dbReference>
<dbReference type="HAMAP" id="MF_00455">
    <property type="entry name" value="Xylose_isom_A"/>
    <property type="match status" value="1"/>
</dbReference>
<dbReference type="InterPro" id="IPR036237">
    <property type="entry name" value="Xyl_isomerase-like_sf"/>
</dbReference>
<dbReference type="InterPro" id="IPR013452">
    <property type="entry name" value="Xylose_isom_bac"/>
</dbReference>
<dbReference type="InterPro" id="IPR001998">
    <property type="entry name" value="Xylose_isomerase"/>
</dbReference>
<dbReference type="NCBIfam" id="NF003998">
    <property type="entry name" value="PRK05474.1"/>
    <property type="match status" value="1"/>
</dbReference>
<dbReference type="NCBIfam" id="TIGR02630">
    <property type="entry name" value="xylose_isom_A"/>
    <property type="match status" value="1"/>
</dbReference>
<dbReference type="PANTHER" id="PTHR48408">
    <property type="match status" value="1"/>
</dbReference>
<dbReference type="PANTHER" id="PTHR48408:SF1">
    <property type="entry name" value="XYLOSE ISOMERASE"/>
    <property type="match status" value="1"/>
</dbReference>
<dbReference type="PRINTS" id="PR00688">
    <property type="entry name" value="XYLOSISMRASE"/>
</dbReference>
<dbReference type="SUPFAM" id="SSF51658">
    <property type="entry name" value="Xylose isomerase-like"/>
    <property type="match status" value="1"/>
</dbReference>
<dbReference type="PROSITE" id="PS51415">
    <property type="entry name" value="XYLOSE_ISOMERASE"/>
    <property type="match status" value="1"/>
</dbReference>
<gene>
    <name evidence="1" type="primary">xylA</name>
    <name type="ordered locus">BCE_2210</name>
</gene>
<accession>Q739D2</accession>
<evidence type="ECO:0000255" key="1">
    <source>
        <dbReference type="HAMAP-Rule" id="MF_00455"/>
    </source>
</evidence>